<accession>Q49LX5</accession>
<reference key="1">
    <citation type="submission" date="2004-07" db="EMBL/GenBank/DDBJ databases">
        <title>Cloning of somatostatin receptors from Canis familiaris.</title>
        <authorList>
            <person name="Liew C.W."/>
            <person name="Richter D."/>
            <person name="Kreienkamp H.-J."/>
        </authorList>
    </citation>
    <scope>NUCLEOTIDE SEQUENCE [GENOMIC DNA]</scope>
</reference>
<dbReference type="EMBL" id="AY702069">
    <property type="protein sequence ID" value="AAW31435.1"/>
    <property type="molecule type" value="Genomic_DNA"/>
</dbReference>
<dbReference type="RefSeq" id="NP_001026986.1">
    <property type="nucleotide sequence ID" value="NM_001031816.1"/>
</dbReference>
<dbReference type="SMR" id="Q49LX5"/>
<dbReference type="FunCoup" id="Q49LX5">
    <property type="interactions" value="159"/>
</dbReference>
<dbReference type="STRING" id="9615.ENSCAFP00000020273"/>
<dbReference type="GlyCosmos" id="Q49LX5">
    <property type="glycosylation" value="3 sites, No reported glycans"/>
</dbReference>
<dbReference type="PaxDb" id="9612-ENSCAFP00000020273"/>
<dbReference type="Ensembl" id="ENSCAFT00000021824.5">
    <property type="protein sequence ID" value="ENSCAFP00000020273.5"/>
    <property type="gene ID" value="ENSCAFG00000013755.5"/>
</dbReference>
<dbReference type="Ensembl" id="ENSCAFT00040000280.1">
    <property type="protein sequence ID" value="ENSCAFP00040000215.1"/>
    <property type="gene ID" value="ENSCAFG00040000183.1"/>
</dbReference>
<dbReference type="GeneID" id="403455"/>
<dbReference type="KEGG" id="cfa:403455"/>
<dbReference type="CTD" id="6751"/>
<dbReference type="VGNC" id="VGNC:46843">
    <property type="gene designation" value="SSTR1"/>
</dbReference>
<dbReference type="eggNOG" id="KOG3656">
    <property type="taxonomic scope" value="Eukaryota"/>
</dbReference>
<dbReference type="HOGENOM" id="CLU_009579_8_1_1"/>
<dbReference type="InParanoid" id="Q49LX5"/>
<dbReference type="OMA" id="MVNLAVW"/>
<dbReference type="OrthoDB" id="6076970at2759"/>
<dbReference type="TreeFam" id="TF315737"/>
<dbReference type="Reactome" id="R-CFA-375276">
    <property type="pathway name" value="Peptide ligand-binding receptors"/>
</dbReference>
<dbReference type="Reactome" id="R-CFA-418594">
    <property type="pathway name" value="G alpha (i) signalling events"/>
</dbReference>
<dbReference type="Proteomes" id="UP000002254">
    <property type="component" value="Chromosome 8"/>
</dbReference>
<dbReference type="Proteomes" id="UP000694429">
    <property type="component" value="Unplaced"/>
</dbReference>
<dbReference type="Proteomes" id="UP000694542">
    <property type="component" value="Chromosome 8"/>
</dbReference>
<dbReference type="Proteomes" id="UP000805418">
    <property type="component" value="Unplaced"/>
</dbReference>
<dbReference type="GO" id="GO:0005886">
    <property type="term" value="C:plasma membrane"/>
    <property type="evidence" value="ECO:0007669"/>
    <property type="project" value="UniProtKB-SubCell"/>
</dbReference>
<dbReference type="GO" id="GO:0004994">
    <property type="term" value="F:somatostatin receptor activity"/>
    <property type="evidence" value="ECO:0007669"/>
    <property type="project" value="InterPro"/>
</dbReference>
<dbReference type="CDD" id="cd15970">
    <property type="entry name" value="7tmA_SSTR1"/>
    <property type="match status" value="1"/>
</dbReference>
<dbReference type="FunFam" id="1.20.1070.10:FF:000060">
    <property type="entry name" value="Somatostatin receptor type 1"/>
    <property type="match status" value="1"/>
</dbReference>
<dbReference type="Gene3D" id="1.20.1070.10">
    <property type="entry name" value="Rhodopsin 7-helix transmembrane proteins"/>
    <property type="match status" value="1"/>
</dbReference>
<dbReference type="InterPro" id="IPR000276">
    <property type="entry name" value="GPCR_Rhodpsn"/>
</dbReference>
<dbReference type="InterPro" id="IPR017452">
    <property type="entry name" value="GPCR_Rhodpsn_7TM"/>
</dbReference>
<dbReference type="InterPro" id="IPR000586">
    <property type="entry name" value="Somatstn_rcpt"/>
</dbReference>
<dbReference type="InterPro" id="IPR001116">
    <property type="entry name" value="Somatstn_rcpt_1"/>
</dbReference>
<dbReference type="PANTHER" id="PTHR24229">
    <property type="entry name" value="NEUROPEPTIDES RECEPTOR"/>
    <property type="match status" value="1"/>
</dbReference>
<dbReference type="PANTHER" id="PTHR24229:SF38">
    <property type="entry name" value="SOMATOSTATIN RECEPTOR TYPE 1"/>
    <property type="match status" value="1"/>
</dbReference>
<dbReference type="Pfam" id="PF00001">
    <property type="entry name" value="7tm_1"/>
    <property type="match status" value="1"/>
</dbReference>
<dbReference type="PRINTS" id="PR00237">
    <property type="entry name" value="GPCRRHODOPSN"/>
</dbReference>
<dbReference type="PRINTS" id="PR00246">
    <property type="entry name" value="SOMATOSTATNR"/>
</dbReference>
<dbReference type="PRINTS" id="PR00587">
    <property type="entry name" value="SOMATOSTTN1R"/>
</dbReference>
<dbReference type="SMART" id="SM01381">
    <property type="entry name" value="7TM_GPCR_Srsx"/>
    <property type="match status" value="1"/>
</dbReference>
<dbReference type="SUPFAM" id="SSF81321">
    <property type="entry name" value="Family A G protein-coupled receptor-like"/>
    <property type="match status" value="1"/>
</dbReference>
<dbReference type="PROSITE" id="PS00237">
    <property type="entry name" value="G_PROTEIN_RECEP_F1_1"/>
    <property type="match status" value="1"/>
</dbReference>
<dbReference type="PROSITE" id="PS50262">
    <property type="entry name" value="G_PROTEIN_RECEP_F1_2"/>
    <property type="match status" value="1"/>
</dbReference>
<comment type="function">
    <text evidence="1">Receptor for somatostatin with higher affinity for somatostatin-14 than -28. This receptor is coupled via pertussis toxin sensitive G proteins to inhibition of adenylyl cyclase. In addition it stimulates phosphotyrosine phosphatase and Na(+)/H(+) exchanger via pertussis toxin insensitive G proteins (By similarity).</text>
</comment>
<comment type="subunit">
    <text evidence="1">Interacts with SKB1.</text>
</comment>
<comment type="subcellular location">
    <subcellularLocation>
        <location evidence="1">Cell membrane</location>
        <topology evidence="1">Multi-pass membrane protein</topology>
    </subcellularLocation>
</comment>
<comment type="similarity">
    <text evidence="3">Belongs to the G-protein coupled receptor 1 family.</text>
</comment>
<feature type="chain" id="PRO_0000289598" description="Somatostatin receptor type 1">
    <location>
        <begin position="1"/>
        <end position="391"/>
    </location>
</feature>
<feature type="topological domain" description="Extracellular" evidence="2">
    <location>
        <begin position="1"/>
        <end position="55"/>
    </location>
</feature>
<feature type="transmembrane region" description="Helical; Name=1" evidence="2">
    <location>
        <begin position="56"/>
        <end position="83"/>
    </location>
</feature>
<feature type="topological domain" description="Cytoplasmic" evidence="2">
    <location>
        <begin position="84"/>
        <end position="93"/>
    </location>
</feature>
<feature type="transmembrane region" description="Helical; Name=2" evidence="2">
    <location>
        <begin position="94"/>
        <end position="119"/>
    </location>
</feature>
<feature type="topological domain" description="Extracellular" evidence="2">
    <location>
        <begin position="120"/>
        <end position="130"/>
    </location>
</feature>
<feature type="transmembrane region" description="Helical; Name=3" evidence="2">
    <location>
        <begin position="131"/>
        <end position="152"/>
    </location>
</feature>
<feature type="topological domain" description="Cytoplasmic" evidence="2">
    <location>
        <begin position="153"/>
        <end position="174"/>
    </location>
</feature>
<feature type="transmembrane region" description="Helical; Name=4" evidence="2">
    <location>
        <begin position="175"/>
        <end position="195"/>
    </location>
</feature>
<feature type="topological domain" description="Extracellular" evidence="2">
    <location>
        <begin position="196"/>
        <end position="218"/>
    </location>
</feature>
<feature type="transmembrane region" description="Helical; Name=5" evidence="2">
    <location>
        <begin position="219"/>
        <end position="243"/>
    </location>
</feature>
<feature type="topological domain" description="Cytoplasmic" evidence="2">
    <location>
        <begin position="244"/>
        <end position="269"/>
    </location>
</feature>
<feature type="transmembrane region" description="Helical; Name=6" evidence="2">
    <location>
        <begin position="270"/>
        <end position="295"/>
    </location>
</feature>
<feature type="topological domain" description="Extracellular" evidence="2">
    <location>
        <begin position="296"/>
        <end position="302"/>
    </location>
</feature>
<feature type="transmembrane region" description="Helical; Name=7" evidence="2">
    <location>
        <begin position="303"/>
        <end position="326"/>
    </location>
</feature>
<feature type="topological domain" description="Cytoplasmic" evidence="2">
    <location>
        <begin position="327"/>
        <end position="391"/>
    </location>
</feature>
<feature type="region of interest" description="Disordered" evidence="4">
    <location>
        <begin position="1"/>
        <end position="49"/>
    </location>
</feature>
<feature type="compositionally biased region" description="Low complexity" evidence="4">
    <location>
        <begin position="1"/>
        <end position="11"/>
    </location>
</feature>
<feature type="compositionally biased region" description="Gly residues" evidence="4">
    <location>
        <begin position="20"/>
        <end position="33"/>
    </location>
</feature>
<feature type="lipid moiety-binding region" description="S-palmitoyl cysteine" evidence="2">
    <location>
        <position position="338"/>
    </location>
</feature>
<feature type="glycosylation site" description="N-linked (GlcNAc...) asparagine" evidence="2">
    <location>
        <position position="4"/>
    </location>
</feature>
<feature type="glycosylation site" description="N-linked (GlcNAc...) asparagine" evidence="2">
    <location>
        <position position="43"/>
    </location>
</feature>
<feature type="glycosylation site" description="N-linked (GlcNAc...) asparagine" evidence="2">
    <location>
        <position position="47"/>
    </location>
</feature>
<feature type="disulfide bond" evidence="3">
    <location>
        <begin position="129"/>
        <end position="207"/>
    </location>
</feature>
<name>SSR1_CANLF</name>
<sequence>MFPNGTASSPSSPSPSPGSCGEGGGSRGPGAGAADGMEEPGRNASQNGTLSEGQGSAILISFIYSVVCLVGLCGNSMVIYVILRYAKMKTATNIYILNLAIADELLMLSVPFLVTSTLLRHWPFGALLCRLVLSVDAVNMFTSIYCLTVLSVDRYVAVVHPIKAARYRRPTVAKVVNLGVWVLSLLVILPIVVFSRTAANSDGTVACNMLMPEPAQRWLVGFVLYTFLMGFLLPVGAICLCYVLIIAKMRMVALKAGWQQRKRSERKITLMVMMVVMVFVICWMPFYVVQLVNVFAEQDDATVSQLSVILGYANSCANPILYGFLSDNFKRSFQRILCLSWMDNAAEEPVDYYATALKSRAYSVEDFQPENLESGGAVFRNGTCTSRITTL</sequence>
<proteinExistence type="inferred from homology"/>
<evidence type="ECO:0000250" key="1"/>
<evidence type="ECO:0000255" key="2"/>
<evidence type="ECO:0000255" key="3">
    <source>
        <dbReference type="PROSITE-ProRule" id="PRU00521"/>
    </source>
</evidence>
<evidence type="ECO:0000256" key="4">
    <source>
        <dbReference type="SAM" id="MobiDB-lite"/>
    </source>
</evidence>
<protein>
    <recommendedName>
        <fullName>Somatostatin receptor type 1</fullName>
        <shortName>SS-1-R</shortName>
        <shortName>SS1-R</shortName>
        <shortName>SS1R</shortName>
    </recommendedName>
</protein>
<gene>
    <name type="primary">SSTR1</name>
</gene>
<organism>
    <name type="scientific">Canis lupus familiaris</name>
    <name type="common">Dog</name>
    <name type="synonym">Canis familiaris</name>
    <dbReference type="NCBI Taxonomy" id="9615"/>
    <lineage>
        <taxon>Eukaryota</taxon>
        <taxon>Metazoa</taxon>
        <taxon>Chordata</taxon>
        <taxon>Craniata</taxon>
        <taxon>Vertebrata</taxon>
        <taxon>Euteleostomi</taxon>
        <taxon>Mammalia</taxon>
        <taxon>Eutheria</taxon>
        <taxon>Laurasiatheria</taxon>
        <taxon>Carnivora</taxon>
        <taxon>Caniformia</taxon>
        <taxon>Canidae</taxon>
        <taxon>Canis</taxon>
    </lineage>
</organism>
<keyword id="KW-1003">Cell membrane</keyword>
<keyword id="KW-1015">Disulfide bond</keyword>
<keyword id="KW-0297">G-protein coupled receptor</keyword>
<keyword id="KW-0325">Glycoprotein</keyword>
<keyword id="KW-0449">Lipoprotein</keyword>
<keyword id="KW-0472">Membrane</keyword>
<keyword id="KW-0564">Palmitate</keyword>
<keyword id="KW-0675">Receptor</keyword>
<keyword id="KW-1185">Reference proteome</keyword>
<keyword id="KW-0807">Transducer</keyword>
<keyword id="KW-0812">Transmembrane</keyword>
<keyword id="KW-1133">Transmembrane helix</keyword>